<reference key="1">
    <citation type="journal article" date="2020" name="Nat. Commun.">
        <title>Genome sequence of the cluster root forming white lupin.</title>
        <authorList>
            <person name="Hufnagel B."/>
            <person name="Marques A."/>
            <person name="Soriano A."/>
            <person name="Marques L."/>
            <person name="Divol F."/>
            <person name="Doumas P."/>
            <person name="Sallet E."/>
            <person name="Mancinotti D."/>
            <person name="Carrere S."/>
            <person name="Marande W."/>
            <person name="Arribat S."/>
            <person name="Keller J."/>
            <person name="Huneau C."/>
            <person name="Blein T."/>
            <person name="Aime D."/>
            <person name="Laguerre M."/>
            <person name="Taylor J."/>
            <person name="Schubert V."/>
            <person name="Nelson M."/>
            <person name="Geu-Flores F."/>
            <person name="Crespi M."/>
            <person name="Gallardo-Guerrero K."/>
            <person name="Delaux P.-M."/>
            <person name="Salse J."/>
            <person name="Berges H."/>
            <person name="Guyot R."/>
            <person name="Gouzy J."/>
            <person name="Peret B."/>
        </authorList>
    </citation>
    <scope>NUCLEOTIDE SEQUENCE [LARGE SCALE GENOMIC DNA]</scope>
    <source>
        <strain>cv. Amiga</strain>
        <tissue>Leaf</tissue>
    </source>
</reference>
<reference key="2">
    <citation type="journal article" date="2023" name="Sci. Adv.">
        <title>The causal mutation leading to sweetness in modern white lupin cultivars.</title>
        <authorList>
            <person name="Mancinotti D."/>
            <person name="Czepiel K."/>
            <person name="Taylor J.L."/>
            <person name="Golshadi Galehshahi H."/>
            <person name="Moeller L.A."/>
            <person name="Jensen M.K."/>
            <person name="Motawia M.S."/>
            <person name="Hufnagel B."/>
            <person name="Soriano A."/>
            <person name="Yeheyis L."/>
            <person name="Kjaerulff L."/>
            <person name="Peret B."/>
            <person name="Staerk D."/>
            <person name="Wendt T."/>
            <person name="Nelson M.N."/>
            <person name="Kroc M."/>
            <person name="Geu-Flores F."/>
        </authorList>
    </citation>
    <scope>POLYMORPHISM</scope>
    <scope>BIOTECHNOLOGY</scope>
    <source>
        <strain>cv. Amiga</strain>
        <tissue>Leaf</tissue>
        <tissue>Stem</tissue>
    </source>
</reference>
<protein>
    <recommendedName>
        <fullName evidence="4">Inactive tetrahydroanabasine acetyltransferase pauper allele</fullName>
    </recommendedName>
</protein>
<dbReference type="EMBL" id="WOCE01000018">
    <property type="protein sequence ID" value="KAE9594223.1"/>
    <property type="molecule type" value="Genomic_DNA"/>
</dbReference>
<dbReference type="SMR" id="A0A6A4NPZ7"/>
<dbReference type="OrthoDB" id="671439at2759"/>
<dbReference type="Proteomes" id="UP000447434">
    <property type="component" value="Chromosome 18"/>
</dbReference>
<dbReference type="Gene3D" id="3.30.559.10">
    <property type="entry name" value="Chloramphenicol acetyltransferase-like domain"/>
    <property type="match status" value="2"/>
</dbReference>
<dbReference type="InterPro" id="IPR023213">
    <property type="entry name" value="CAT-like_dom_sf"/>
</dbReference>
<dbReference type="InterPro" id="IPR050898">
    <property type="entry name" value="Plant_acyltransferase"/>
</dbReference>
<dbReference type="PANTHER" id="PTHR31147">
    <property type="entry name" value="ACYL TRANSFERASE 4"/>
    <property type="match status" value="1"/>
</dbReference>
<dbReference type="PANTHER" id="PTHR31147:SF25">
    <property type="entry name" value="HXXXD-TYPE ACYL-TRANSFERASE FAMILY PROTEIN"/>
    <property type="match status" value="1"/>
</dbReference>
<dbReference type="Pfam" id="PF02458">
    <property type="entry name" value="Transferase"/>
    <property type="match status" value="1"/>
</dbReference>
<comment type="subunit">
    <text evidence="1">Monomer.</text>
</comment>
<comment type="polymorphism">
    <text evidence="2">Plants bearing the pauper allele, present in cv. Amiga (displayed sequence), produce sweet and eatable crops compared to bitter plants cv. Graecus and cv. P27174 (AC P0DO65) due to the blockage of the quinolizidine alkaloids (QAs) biosynthesis pathway and subsequent accumulation of QA pathway intermediates and their derivatives.</text>
</comment>
<comment type="biotechnology">
    <text evidence="2">Disrupting the production of quinolizidine type antinutritional alkaloids (QAs) by selecting inactive tetrahydroanabasine acetyltransferase variants is a potential kick-start for the domestication of novel legume crops.</text>
</comment>
<comment type="similarity">
    <text evidence="3">Belongs to the plant acyltransferase family.</text>
</comment>
<comment type="caution">
    <text evidence="3">Displayed sequence for cv. Amiga (pauper allele) is inactive, an active tetrahydroanabasine acetyltransferase sequence is available for cv. Graecus and cv. P27174 (AC P0DO65).</text>
</comment>
<accession>A0A6A4NPZ7</accession>
<feature type="chain" id="PRO_0000460284" description="Inactive tetrahydroanabasine acetyltransferase pauper allele">
    <location>
        <begin position="1"/>
        <end position="454"/>
    </location>
</feature>
<organism>
    <name type="scientific">Lupinus albus</name>
    <name type="common">White lupine</name>
    <name type="synonym">Lupinus termis</name>
    <dbReference type="NCBI Taxonomy" id="3870"/>
    <lineage>
        <taxon>Eukaryota</taxon>
        <taxon>Viridiplantae</taxon>
        <taxon>Streptophyta</taxon>
        <taxon>Embryophyta</taxon>
        <taxon>Tracheophyta</taxon>
        <taxon>Spermatophyta</taxon>
        <taxon>Magnoliopsida</taxon>
        <taxon>eudicotyledons</taxon>
        <taxon>Gunneridae</taxon>
        <taxon>Pentapetalae</taxon>
        <taxon>rosids</taxon>
        <taxon>fabids</taxon>
        <taxon>Fabales</taxon>
        <taxon>Fabaceae</taxon>
        <taxon>Papilionoideae</taxon>
        <taxon>50 kb inversion clade</taxon>
        <taxon>genistoids sensu lato</taxon>
        <taxon>core genistoids</taxon>
        <taxon>Genisteae</taxon>
        <taxon>Lupinus</taxon>
    </lineage>
</organism>
<gene>
    <name evidence="5" type="ORF">Lalb_Chr18g0051511</name>
</gene>
<name>ITHAT_LUPAL</name>
<keyword id="KW-1185">Reference proteome</keyword>
<evidence type="ECO:0000250" key="1">
    <source>
        <dbReference type="UniProtKB" id="Q9M6E2"/>
    </source>
</evidence>
<evidence type="ECO:0000269" key="2">
    <source>
    </source>
</evidence>
<evidence type="ECO:0000305" key="3"/>
<evidence type="ECO:0000305" key="4">
    <source>
    </source>
</evidence>
<evidence type="ECO:0000312" key="5">
    <source>
        <dbReference type="EMBL" id="KAE9594223.1"/>
    </source>
</evidence>
<proteinExistence type="evidence at protein level"/>
<sequence>MAYQMASLKIEMKEVVHVKPSKPTPSIVLPLSALEHRPYPDSIWPIVHVYQSPSNGQLDPAFVLKQALSKALVYYYPLAGKLVKQPNGKVAINCNNDGVPFLEAIANCELSSLNYLDDHDIRIAKQLVFDFHPQQDENEYPHPVSFKLTKFQCGGFTIGMSTSHIVCDGWGACKFFHAIVELASGKSEPFLKPVWERERLIGSITTQPMPNPMDETTAAVSPFLPATDVMYELFKVDKESIRRLKMSLMKEISCNESMEQSFTTFESLAAYVWRSRARALNLNNEGKTLLVFSVQVRQHMSPPLSDGYYGTAITEGQVVLTMKELNEKPLSDIVKLVKESKNVAFTGDFIKKTIDTLESNPENFNVEEGPGATLALSDWKHLGFMPNVDFGWKEPINMVPAPCNMFEYEGLCIFLSPSNHDPSMEGGVRVFISLPSVAMPKFKEEMEALKVITP</sequence>